<organism>
    <name type="scientific">Laribacter hongkongensis (strain HLHK9)</name>
    <dbReference type="NCBI Taxonomy" id="557598"/>
    <lineage>
        <taxon>Bacteria</taxon>
        <taxon>Pseudomonadati</taxon>
        <taxon>Pseudomonadota</taxon>
        <taxon>Betaproteobacteria</taxon>
        <taxon>Neisseriales</taxon>
        <taxon>Aquaspirillaceae</taxon>
        <taxon>Laribacter</taxon>
    </lineage>
</organism>
<keyword id="KW-0143">Chaperone</keyword>
<keyword id="KW-0963">Cytoplasm</keyword>
<keyword id="KW-0235">DNA replication</keyword>
<keyword id="KW-0479">Metal-binding</keyword>
<keyword id="KW-1185">Reference proteome</keyword>
<keyword id="KW-0677">Repeat</keyword>
<keyword id="KW-0346">Stress response</keyword>
<keyword id="KW-0862">Zinc</keyword>
<keyword id="KW-0863">Zinc-finger</keyword>
<gene>
    <name evidence="1" type="primary">dnaJ</name>
    <name type="ordered locus">LHK_02738</name>
</gene>
<evidence type="ECO:0000255" key="1">
    <source>
        <dbReference type="HAMAP-Rule" id="MF_01152"/>
    </source>
</evidence>
<accession>C1DD87</accession>
<dbReference type="EMBL" id="CP001154">
    <property type="protein sequence ID" value="ACO75719.1"/>
    <property type="molecule type" value="Genomic_DNA"/>
</dbReference>
<dbReference type="RefSeq" id="WP_012698182.1">
    <property type="nucleotide sequence ID" value="NC_012559.1"/>
</dbReference>
<dbReference type="SMR" id="C1DD87"/>
<dbReference type="STRING" id="557598.LHK_02738"/>
<dbReference type="KEGG" id="lhk:LHK_02738"/>
<dbReference type="eggNOG" id="COG0484">
    <property type="taxonomic scope" value="Bacteria"/>
</dbReference>
<dbReference type="HOGENOM" id="CLU_017633_0_7_4"/>
<dbReference type="Proteomes" id="UP000002010">
    <property type="component" value="Chromosome"/>
</dbReference>
<dbReference type="GO" id="GO:0005737">
    <property type="term" value="C:cytoplasm"/>
    <property type="evidence" value="ECO:0007669"/>
    <property type="project" value="UniProtKB-SubCell"/>
</dbReference>
<dbReference type="GO" id="GO:0005524">
    <property type="term" value="F:ATP binding"/>
    <property type="evidence" value="ECO:0007669"/>
    <property type="project" value="InterPro"/>
</dbReference>
<dbReference type="GO" id="GO:0031072">
    <property type="term" value="F:heat shock protein binding"/>
    <property type="evidence" value="ECO:0007669"/>
    <property type="project" value="InterPro"/>
</dbReference>
<dbReference type="GO" id="GO:0051082">
    <property type="term" value="F:unfolded protein binding"/>
    <property type="evidence" value="ECO:0007669"/>
    <property type="project" value="UniProtKB-UniRule"/>
</dbReference>
<dbReference type="GO" id="GO:0008270">
    <property type="term" value="F:zinc ion binding"/>
    <property type="evidence" value="ECO:0007669"/>
    <property type="project" value="UniProtKB-UniRule"/>
</dbReference>
<dbReference type="GO" id="GO:0051085">
    <property type="term" value="P:chaperone cofactor-dependent protein refolding"/>
    <property type="evidence" value="ECO:0007669"/>
    <property type="project" value="TreeGrafter"/>
</dbReference>
<dbReference type="GO" id="GO:0006260">
    <property type="term" value="P:DNA replication"/>
    <property type="evidence" value="ECO:0007669"/>
    <property type="project" value="UniProtKB-KW"/>
</dbReference>
<dbReference type="GO" id="GO:0042026">
    <property type="term" value="P:protein refolding"/>
    <property type="evidence" value="ECO:0007669"/>
    <property type="project" value="TreeGrafter"/>
</dbReference>
<dbReference type="GO" id="GO:0009408">
    <property type="term" value="P:response to heat"/>
    <property type="evidence" value="ECO:0007669"/>
    <property type="project" value="InterPro"/>
</dbReference>
<dbReference type="CDD" id="cd06257">
    <property type="entry name" value="DnaJ"/>
    <property type="match status" value="1"/>
</dbReference>
<dbReference type="CDD" id="cd10747">
    <property type="entry name" value="DnaJ_C"/>
    <property type="match status" value="1"/>
</dbReference>
<dbReference type="CDD" id="cd10719">
    <property type="entry name" value="DnaJ_zf"/>
    <property type="match status" value="1"/>
</dbReference>
<dbReference type="FunFam" id="1.10.287.110:FF:000031">
    <property type="entry name" value="Molecular chaperone DnaJ"/>
    <property type="match status" value="1"/>
</dbReference>
<dbReference type="FunFam" id="2.10.230.10:FF:000002">
    <property type="entry name" value="Molecular chaperone DnaJ"/>
    <property type="match status" value="1"/>
</dbReference>
<dbReference type="FunFam" id="2.60.260.20:FF:000004">
    <property type="entry name" value="Molecular chaperone DnaJ"/>
    <property type="match status" value="1"/>
</dbReference>
<dbReference type="FunFam" id="2.60.260.20:FF:000009">
    <property type="entry name" value="Putative Mitochondrial DnaJ chaperone"/>
    <property type="match status" value="1"/>
</dbReference>
<dbReference type="Gene3D" id="1.10.287.110">
    <property type="entry name" value="DnaJ domain"/>
    <property type="match status" value="1"/>
</dbReference>
<dbReference type="Gene3D" id="2.10.230.10">
    <property type="entry name" value="Heat shock protein DnaJ, cysteine-rich domain"/>
    <property type="match status" value="1"/>
</dbReference>
<dbReference type="Gene3D" id="2.60.260.20">
    <property type="entry name" value="Urease metallochaperone UreE, N-terminal domain"/>
    <property type="match status" value="2"/>
</dbReference>
<dbReference type="HAMAP" id="MF_01152">
    <property type="entry name" value="DnaJ"/>
    <property type="match status" value="1"/>
</dbReference>
<dbReference type="InterPro" id="IPR012724">
    <property type="entry name" value="DnaJ"/>
</dbReference>
<dbReference type="InterPro" id="IPR002939">
    <property type="entry name" value="DnaJ_C"/>
</dbReference>
<dbReference type="InterPro" id="IPR001623">
    <property type="entry name" value="DnaJ_domain"/>
</dbReference>
<dbReference type="InterPro" id="IPR018253">
    <property type="entry name" value="DnaJ_domain_CS"/>
</dbReference>
<dbReference type="InterPro" id="IPR008971">
    <property type="entry name" value="HSP40/DnaJ_pept-bd"/>
</dbReference>
<dbReference type="InterPro" id="IPR001305">
    <property type="entry name" value="HSP_DnaJ_Cys-rich_dom"/>
</dbReference>
<dbReference type="InterPro" id="IPR036410">
    <property type="entry name" value="HSP_DnaJ_Cys-rich_dom_sf"/>
</dbReference>
<dbReference type="InterPro" id="IPR036869">
    <property type="entry name" value="J_dom_sf"/>
</dbReference>
<dbReference type="NCBIfam" id="TIGR02349">
    <property type="entry name" value="DnaJ_bact"/>
    <property type="match status" value="1"/>
</dbReference>
<dbReference type="NCBIfam" id="NF008035">
    <property type="entry name" value="PRK10767.1"/>
    <property type="match status" value="1"/>
</dbReference>
<dbReference type="PANTHER" id="PTHR43096:SF48">
    <property type="entry name" value="CHAPERONE PROTEIN DNAJ"/>
    <property type="match status" value="1"/>
</dbReference>
<dbReference type="PANTHER" id="PTHR43096">
    <property type="entry name" value="DNAJ HOMOLOG 1, MITOCHONDRIAL-RELATED"/>
    <property type="match status" value="1"/>
</dbReference>
<dbReference type="Pfam" id="PF00226">
    <property type="entry name" value="DnaJ"/>
    <property type="match status" value="1"/>
</dbReference>
<dbReference type="Pfam" id="PF01556">
    <property type="entry name" value="DnaJ_C"/>
    <property type="match status" value="1"/>
</dbReference>
<dbReference type="Pfam" id="PF00684">
    <property type="entry name" value="DnaJ_CXXCXGXG"/>
    <property type="match status" value="1"/>
</dbReference>
<dbReference type="PRINTS" id="PR00625">
    <property type="entry name" value="JDOMAIN"/>
</dbReference>
<dbReference type="SMART" id="SM00271">
    <property type="entry name" value="DnaJ"/>
    <property type="match status" value="1"/>
</dbReference>
<dbReference type="SUPFAM" id="SSF46565">
    <property type="entry name" value="Chaperone J-domain"/>
    <property type="match status" value="1"/>
</dbReference>
<dbReference type="SUPFAM" id="SSF57938">
    <property type="entry name" value="DnaJ/Hsp40 cysteine-rich domain"/>
    <property type="match status" value="1"/>
</dbReference>
<dbReference type="SUPFAM" id="SSF49493">
    <property type="entry name" value="HSP40/DnaJ peptide-binding domain"/>
    <property type="match status" value="2"/>
</dbReference>
<dbReference type="PROSITE" id="PS00636">
    <property type="entry name" value="DNAJ_1"/>
    <property type="match status" value="1"/>
</dbReference>
<dbReference type="PROSITE" id="PS50076">
    <property type="entry name" value="DNAJ_2"/>
    <property type="match status" value="1"/>
</dbReference>
<dbReference type="PROSITE" id="PS51188">
    <property type="entry name" value="ZF_CR"/>
    <property type="match status" value="1"/>
</dbReference>
<feature type="chain" id="PRO_1000164265" description="Chaperone protein DnaJ">
    <location>
        <begin position="1"/>
        <end position="380"/>
    </location>
</feature>
<feature type="domain" description="J" evidence="1">
    <location>
        <begin position="5"/>
        <end position="70"/>
    </location>
</feature>
<feature type="repeat" description="CXXCXGXG motif">
    <location>
        <begin position="152"/>
        <end position="159"/>
    </location>
</feature>
<feature type="repeat" description="CXXCXGXG motif">
    <location>
        <begin position="169"/>
        <end position="176"/>
    </location>
</feature>
<feature type="repeat" description="CXXCXGXG motif">
    <location>
        <begin position="191"/>
        <end position="198"/>
    </location>
</feature>
<feature type="repeat" description="CXXCXGXG motif">
    <location>
        <begin position="205"/>
        <end position="212"/>
    </location>
</feature>
<feature type="zinc finger region" description="CR-type" evidence="1">
    <location>
        <begin position="139"/>
        <end position="217"/>
    </location>
</feature>
<feature type="binding site" evidence="1">
    <location>
        <position position="152"/>
    </location>
    <ligand>
        <name>Zn(2+)</name>
        <dbReference type="ChEBI" id="CHEBI:29105"/>
        <label>1</label>
    </ligand>
</feature>
<feature type="binding site" evidence="1">
    <location>
        <position position="155"/>
    </location>
    <ligand>
        <name>Zn(2+)</name>
        <dbReference type="ChEBI" id="CHEBI:29105"/>
        <label>1</label>
    </ligand>
</feature>
<feature type="binding site" evidence="1">
    <location>
        <position position="169"/>
    </location>
    <ligand>
        <name>Zn(2+)</name>
        <dbReference type="ChEBI" id="CHEBI:29105"/>
        <label>2</label>
    </ligand>
</feature>
<feature type="binding site" evidence="1">
    <location>
        <position position="172"/>
    </location>
    <ligand>
        <name>Zn(2+)</name>
        <dbReference type="ChEBI" id="CHEBI:29105"/>
        <label>2</label>
    </ligand>
</feature>
<feature type="binding site" evidence="1">
    <location>
        <position position="191"/>
    </location>
    <ligand>
        <name>Zn(2+)</name>
        <dbReference type="ChEBI" id="CHEBI:29105"/>
        <label>2</label>
    </ligand>
</feature>
<feature type="binding site" evidence="1">
    <location>
        <position position="194"/>
    </location>
    <ligand>
        <name>Zn(2+)</name>
        <dbReference type="ChEBI" id="CHEBI:29105"/>
        <label>2</label>
    </ligand>
</feature>
<feature type="binding site" evidence="1">
    <location>
        <position position="205"/>
    </location>
    <ligand>
        <name>Zn(2+)</name>
        <dbReference type="ChEBI" id="CHEBI:29105"/>
        <label>1</label>
    </ligand>
</feature>
<feature type="binding site" evidence="1">
    <location>
        <position position="208"/>
    </location>
    <ligand>
        <name>Zn(2+)</name>
        <dbReference type="ChEBI" id="CHEBI:29105"/>
        <label>1</label>
    </ligand>
</feature>
<name>DNAJ_LARHH</name>
<reference key="1">
    <citation type="journal article" date="2009" name="PLoS Genet.">
        <title>The complete genome and proteome of Laribacter hongkongensis reveal potential mechanisms for adaptations to different temperatures and habitats.</title>
        <authorList>
            <person name="Woo P.C.Y."/>
            <person name="Lau S.K.P."/>
            <person name="Tse H."/>
            <person name="Teng J.L.L."/>
            <person name="Curreem S.O."/>
            <person name="Tsang A.K.L."/>
            <person name="Fan R.Y.Y."/>
            <person name="Wong G.K.M."/>
            <person name="Huang Y."/>
            <person name="Loman N.J."/>
            <person name="Snyder L.A.S."/>
            <person name="Cai J.J."/>
            <person name="Huang J.-D."/>
            <person name="Mak W."/>
            <person name="Pallen M.J."/>
            <person name="Lok S."/>
            <person name="Yuen K.-Y."/>
        </authorList>
    </citation>
    <scope>NUCLEOTIDE SEQUENCE [LARGE SCALE GENOMIC DNA]</scope>
    <source>
        <strain>HLHK9</strain>
    </source>
</reference>
<protein>
    <recommendedName>
        <fullName evidence="1">Chaperone protein DnaJ</fullName>
    </recommendedName>
</protein>
<comment type="function">
    <text evidence="1">Participates actively in the response to hyperosmotic and heat shock by preventing the aggregation of stress-denatured proteins and by disaggregating proteins, also in an autonomous, DnaK-independent fashion. Unfolded proteins bind initially to DnaJ; upon interaction with the DnaJ-bound protein, DnaK hydrolyzes its bound ATP, resulting in the formation of a stable complex. GrpE releases ADP from DnaK; ATP binding to DnaK triggers the release of the substrate protein, thus completing the reaction cycle. Several rounds of ATP-dependent interactions between DnaJ, DnaK and GrpE are required for fully efficient folding. Also involved, together with DnaK and GrpE, in the DNA replication of plasmids through activation of initiation proteins.</text>
</comment>
<comment type="cofactor">
    <cofactor evidence="1">
        <name>Zn(2+)</name>
        <dbReference type="ChEBI" id="CHEBI:29105"/>
    </cofactor>
    <text evidence="1">Binds 2 Zn(2+) ions per monomer.</text>
</comment>
<comment type="subunit">
    <text evidence="1">Homodimer.</text>
</comment>
<comment type="subcellular location">
    <subcellularLocation>
        <location evidence="1">Cytoplasm</location>
    </subcellularLocation>
</comment>
<comment type="domain">
    <text evidence="1">The J domain is necessary and sufficient to stimulate DnaK ATPase activity. Zinc center 1 plays an important role in the autonomous, DnaK-independent chaperone activity of DnaJ. Zinc center 2 is essential for interaction with DnaK and for DnaJ activity.</text>
</comment>
<comment type="similarity">
    <text evidence="1">Belongs to the DnaJ family.</text>
</comment>
<sequence>MSKKDFYDVLGVNRDASDDDIKKAYRKLAMKYHPDRNPDSKDAEEKFKEAKEAYEILSDAQKRAAYDQYGHAGVDPQAGFGGAGGQQGFGGFGDAFADIFGDIFGGGARAGGGGGRNAVYRGSDLRYNLEITLEEAARGCEKQIRIPTMEECSHCHGSGAKPGTEPKTCPTCGGAGQVRMQQGFFSIQQTCPTCHGSGKQITDPCNICHGAGRVKSQKTLNVKIPAGVDDGDRIRLSGEGEPGTNGGPAGDLYVVTHIKPHAVFERDGMDLHCEMPISFATAALGGEIEIPTLDGAAKLRIPAETQSGQVFRLRGKGIKALRASQHGDLMCHVQVETPVKLTDRQKELLREFDAISQGAPAKHNPKAQSFMDKLKDFFGG</sequence>
<proteinExistence type="inferred from homology"/>